<sequence>MYPMDRIQQKHARQIDLLENLTAVIQDYPNPACIRDETGKFIFCNTLFHESFLTQDQSAEKWLLSQRDFCELISVTEMEAYRNEHTHLNLVEDVFIQNRFWTISVQSFLNGHRNIILWQFYDAAHVRHKDSYNQKTIVSDDIRNIIRRMSDDSSVSSYVNDVFYLYSTGISHNAIARILNISISTSKKHASLICDYFSVSNKDELIILLYNKKFIYYLYEKAMCIINTR</sequence>
<feature type="chain" id="PRO_0000068456" description="Protein TraJ">
    <location>
        <begin position="1"/>
        <end position="229"/>
    </location>
</feature>
<feature type="helix" evidence="2">
    <location>
        <begin position="17"/>
        <end position="25"/>
    </location>
</feature>
<feature type="strand" evidence="2">
    <location>
        <begin position="32"/>
        <end position="36"/>
    </location>
</feature>
<feature type="strand" evidence="2">
    <location>
        <begin position="41"/>
        <end position="44"/>
    </location>
</feature>
<feature type="helix" evidence="2">
    <location>
        <begin position="46"/>
        <end position="52"/>
    </location>
</feature>
<feature type="helix" evidence="2">
    <location>
        <begin position="59"/>
        <end position="65"/>
    </location>
</feature>
<feature type="helix" evidence="2">
    <location>
        <begin position="70"/>
        <end position="80"/>
    </location>
</feature>
<feature type="strand" evidence="2">
    <location>
        <begin position="88"/>
        <end position="96"/>
    </location>
</feature>
<feature type="strand" evidence="2">
    <location>
        <begin position="99"/>
        <end position="110"/>
    </location>
</feature>
<feature type="strand" evidence="2">
    <location>
        <begin position="113"/>
        <end position="127"/>
    </location>
</feature>
<reference key="1">
    <citation type="journal article" date="1983" name="Gene">
        <title>The control region of the F plasmid transfer operon: DNA sequence of the traJ and traY genes and characterisation of the traY leads to Z promoter.</title>
        <authorList>
            <person name="Fowler T."/>
            <person name="Taylor L."/>
            <person name="Thompson R."/>
        </authorList>
    </citation>
    <scope>NUCLEOTIDE SEQUENCE [GENOMIC DNA]</scope>
</reference>
<reference key="2">
    <citation type="journal article" date="1994" name="Microbiol. Rev.">
        <title>Analysis of the sequence and gene products of the transfer region of the F sex factor.</title>
        <authorList>
            <person name="Frost L.S."/>
            <person name="Ippen-Ihler K."/>
            <person name="Skurray R.A."/>
        </authorList>
    </citation>
    <scope>NUCLEOTIDE SEQUENCE [GENOMIC DNA]</scope>
</reference>
<reference key="3">
    <citation type="submission" date="2000-04" db="EMBL/GenBank/DDBJ databases">
        <title>Complete nucleotide sequence of the F plasmid: its implications for organization and diversification of plasmid genomes.</title>
        <authorList>
            <person name="Shimizu H."/>
            <person name="Saitoh Y."/>
            <person name="Suda Y."/>
            <person name="Uehara K."/>
            <person name="Sampei G."/>
            <person name="Mizobuchi K."/>
        </authorList>
    </citation>
    <scope>NUCLEOTIDE SEQUENCE [LARGE SCALE GENOMIC DNA]</scope>
    <source>
        <strain>K12 / CR63</strain>
    </source>
</reference>
<reference key="4">
    <citation type="journal article" date="1982" name="Mol. Gen. Genet.">
        <title>Promoter mapping and DNA sequencing of the F plasmid transfer genes traM and traJ.</title>
        <authorList>
            <person name="Thompson R."/>
            <person name="Taylor L."/>
        </authorList>
    </citation>
    <scope>NUCLEOTIDE SEQUENCE [GENOMIC DNA] OF 1-17</scope>
</reference>
<proteinExistence type="evidence at protein level"/>
<comment type="function">
    <text>This protein is essential for positively regulating the expression of transfer genes that are involved in the conjugal transfer of DNA between bacterial cells.</text>
</comment>
<comment type="subcellular location">
    <subcellularLocation>
        <location evidence="1">Cytoplasm</location>
    </subcellularLocation>
</comment>
<dbReference type="EMBL" id="K01147">
    <property type="protein sequence ID" value="AAA24908.1"/>
    <property type="molecule type" value="Genomic_DNA"/>
</dbReference>
<dbReference type="EMBL" id="U01159">
    <property type="protein sequence ID" value="AAC44188.1"/>
    <property type="molecule type" value="Genomic_DNA"/>
</dbReference>
<dbReference type="EMBL" id="AP001918">
    <property type="protein sequence ID" value="BAA97942.1"/>
    <property type="molecule type" value="Genomic_DNA"/>
</dbReference>
<dbReference type="EMBL" id="X00545">
    <property type="protein sequence ID" value="CAA25217.1"/>
    <property type="molecule type" value="Genomic_DNA"/>
</dbReference>
<dbReference type="PIR" id="A21874">
    <property type="entry name" value="BVECTJ"/>
</dbReference>
<dbReference type="RefSeq" id="NP_061451.1">
    <property type="nucleotide sequence ID" value="NC_002483.1"/>
</dbReference>
<dbReference type="RefSeq" id="NP_862917.1">
    <property type="nucleotide sequence ID" value="NC_004998.1"/>
</dbReference>
<dbReference type="RefSeq" id="WP_000283385.1">
    <property type="nucleotide sequence ID" value="NZ_SSUW01000046.1"/>
</dbReference>
<dbReference type="RefSeq" id="YP_009060158.1">
    <property type="nucleotide sequence ID" value="NC_024956.1"/>
</dbReference>
<dbReference type="RefSeq" id="YP_009068353.1">
    <property type="nucleotide sequence ID" value="NC_025139.1"/>
</dbReference>
<dbReference type="RefSeq" id="YP_009070618.1">
    <property type="nucleotide sequence ID" value="NC_025175.1"/>
</dbReference>
<dbReference type="RefSeq" id="YP_009071228.1">
    <property type="nucleotide sequence ID" value="NC_025179.1"/>
</dbReference>
<dbReference type="PDB" id="4KQD">
    <property type="method" value="X-ray"/>
    <property type="resolution" value="1.55 A"/>
    <property type="chains" value="A/B/C/D=14-133"/>
</dbReference>
<dbReference type="PDBsum" id="4KQD"/>
<dbReference type="SMR" id="P06626"/>
<dbReference type="IntAct" id="P06626">
    <property type="interactions" value="1"/>
</dbReference>
<dbReference type="KEGG" id="ecoc:C3026_24465"/>
<dbReference type="PATRIC" id="fig|83333.107.peg.641"/>
<dbReference type="OrthoDB" id="6627197at2"/>
<dbReference type="EvolutionaryTrace" id="P06626"/>
<dbReference type="PRO" id="PR:P06626"/>
<dbReference type="GO" id="GO:0005737">
    <property type="term" value="C:cytoplasm"/>
    <property type="evidence" value="ECO:0007669"/>
    <property type="project" value="UniProtKB-SubCell"/>
</dbReference>
<dbReference type="GO" id="GO:0003677">
    <property type="term" value="F:DNA binding"/>
    <property type="evidence" value="ECO:0007669"/>
    <property type="project" value="InterPro"/>
</dbReference>
<dbReference type="GO" id="GO:0006355">
    <property type="term" value="P:regulation of DNA-templated transcription"/>
    <property type="evidence" value="ECO:0007669"/>
    <property type="project" value="InterPro"/>
</dbReference>
<dbReference type="Gene3D" id="3.30.450.20">
    <property type="entry name" value="PAS domain"/>
    <property type="match status" value="1"/>
</dbReference>
<dbReference type="Gene3D" id="1.10.10.10">
    <property type="entry name" value="Winged helix-like DNA-binding domain superfamily/Winged helix DNA-binding domain"/>
    <property type="match status" value="1"/>
</dbReference>
<dbReference type="InterPro" id="IPR016032">
    <property type="entry name" value="Sig_transdc_resp-reg_C-effctor"/>
</dbReference>
<dbReference type="InterPro" id="IPR016383">
    <property type="entry name" value="TraJ"/>
</dbReference>
<dbReference type="InterPro" id="IPR036388">
    <property type="entry name" value="WH-like_DNA-bd_sf"/>
</dbReference>
<dbReference type="NCBIfam" id="NF010275">
    <property type="entry name" value="PRK13719.1-4"/>
    <property type="match status" value="1"/>
</dbReference>
<dbReference type="PIRSF" id="PIRSF003267">
    <property type="entry name" value="TraJ_F"/>
    <property type="match status" value="1"/>
</dbReference>
<dbReference type="SUPFAM" id="SSF46894">
    <property type="entry name" value="C-terminal effector domain of the bipartite response regulators"/>
    <property type="match status" value="1"/>
</dbReference>
<protein>
    <recommendedName>
        <fullName>Protein TraJ</fullName>
    </recommendedName>
</protein>
<accession>P06626</accession>
<geneLocation type="plasmid">
    <name>F</name>
</geneLocation>
<evidence type="ECO:0000250" key="1"/>
<evidence type="ECO:0007829" key="2">
    <source>
        <dbReference type="PDB" id="4KQD"/>
    </source>
</evidence>
<organism>
    <name type="scientific">Escherichia coli (strain K12)</name>
    <dbReference type="NCBI Taxonomy" id="83333"/>
    <lineage>
        <taxon>Bacteria</taxon>
        <taxon>Pseudomonadati</taxon>
        <taxon>Pseudomonadota</taxon>
        <taxon>Gammaproteobacteria</taxon>
        <taxon>Enterobacterales</taxon>
        <taxon>Enterobacteriaceae</taxon>
        <taxon>Escherichia</taxon>
    </lineage>
</organism>
<name>TRAJ1_ECOLI</name>
<keyword id="KW-0002">3D-structure</keyword>
<keyword id="KW-0010">Activator</keyword>
<keyword id="KW-0184">Conjugation</keyword>
<keyword id="KW-0963">Cytoplasm</keyword>
<keyword id="KW-0614">Plasmid</keyword>
<keyword id="KW-0804">Transcription</keyword>
<keyword id="KW-0805">Transcription regulation</keyword>
<gene>
    <name type="primary">traJ</name>
    <name type="ordered locus">ECOK12F072</name>
</gene>